<name>KTHY_STAAS</name>
<feature type="chain" id="PRO_0000155342" description="Thymidylate kinase">
    <location>
        <begin position="1"/>
        <end position="205"/>
    </location>
</feature>
<feature type="binding site" evidence="1">
    <location>
        <begin position="9"/>
        <end position="16"/>
    </location>
    <ligand>
        <name>ATP</name>
        <dbReference type="ChEBI" id="CHEBI:30616"/>
    </ligand>
</feature>
<reference key="1">
    <citation type="journal article" date="2004" name="Proc. Natl. Acad. Sci. U.S.A.">
        <title>Complete genomes of two clinical Staphylococcus aureus strains: evidence for the rapid evolution of virulence and drug resistance.</title>
        <authorList>
            <person name="Holden M.T.G."/>
            <person name="Feil E.J."/>
            <person name="Lindsay J.A."/>
            <person name="Peacock S.J."/>
            <person name="Day N.P.J."/>
            <person name="Enright M.C."/>
            <person name="Foster T.J."/>
            <person name="Moore C.E."/>
            <person name="Hurst L."/>
            <person name="Atkin R."/>
            <person name="Barron A."/>
            <person name="Bason N."/>
            <person name="Bentley S.D."/>
            <person name="Chillingworth C."/>
            <person name="Chillingworth T."/>
            <person name="Churcher C."/>
            <person name="Clark L."/>
            <person name="Corton C."/>
            <person name="Cronin A."/>
            <person name="Doggett J."/>
            <person name="Dowd L."/>
            <person name="Feltwell T."/>
            <person name="Hance Z."/>
            <person name="Harris B."/>
            <person name="Hauser H."/>
            <person name="Holroyd S."/>
            <person name="Jagels K."/>
            <person name="James K.D."/>
            <person name="Lennard N."/>
            <person name="Line A."/>
            <person name="Mayes R."/>
            <person name="Moule S."/>
            <person name="Mungall K."/>
            <person name="Ormond D."/>
            <person name="Quail M.A."/>
            <person name="Rabbinowitsch E."/>
            <person name="Rutherford K.M."/>
            <person name="Sanders M."/>
            <person name="Sharp S."/>
            <person name="Simmonds M."/>
            <person name="Stevens K."/>
            <person name="Whitehead S."/>
            <person name="Barrell B.G."/>
            <person name="Spratt B.G."/>
            <person name="Parkhill J."/>
        </authorList>
    </citation>
    <scope>NUCLEOTIDE SEQUENCE [LARGE SCALE GENOMIC DNA]</scope>
    <source>
        <strain>MSSA476</strain>
    </source>
</reference>
<keyword id="KW-0067">ATP-binding</keyword>
<keyword id="KW-0418">Kinase</keyword>
<keyword id="KW-0545">Nucleotide biosynthesis</keyword>
<keyword id="KW-0547">Nucleotide-binding</keyword>
<keyword id="KW-0808">Transferase</keyword>
<dbReference type="EC" id="2.7.4.9" evidence="1"/>
<dbReference type="EMBL" id="BX571857">
    <property type="protein sequence ID" value="CAG42214.1"/>
    <property type="molecule type" value="Genomic_DNA"/>
</dbReference>
<dbReference type="RefSeq" id="WP_001272131.1">
    <property type="nucleotide sequence ID" value="NC_002953.3"/>
</dbReference>
<dbReference type="SMR" id="Q6GC06"/>
<dbReference type="KEGG" id="sas:SAS0439"/>
<dbReference type="HOGENOM" id="CLU_049131_0_2_9"/>
<dbReference type="GO" id="GO:0005829">
    <property type="term" value="C:cytosol"/>
    <property type="evidence" value="ECO:0007669"/>
    <property type="project" value="TreeGrafter"/>
</dbReference>
<dbReference type="GO" id="GO:0005524">
    <property type="term" value="F:ATP binding"/>
    <property type="evidence" value="ECO:0007669"/>
    <property type="project" value="UniProtKB-UniRule"/>
</dbReference>
<dbReference type="GO" id="GO:0004798">
    <property type="term" value="F:dTMP kinase activity"/>
    <property type="evidence" value="ECO:0007669"/>
    <property type="project" value="UniProtKB-UniRule"/>
</dbReference>
<dbReference type="GO" id="GO:0006233">
    <property type="term" value="P:dTDP biosynthetic process"/>
    <property type="evidence" value="ECO:0007669"/>
    <property type="project" value="InterPro"/>
</dbReference>
<dbReference type="GO" id="GO:0006235">
    <property type="term" value="P:dTTP biosynthetic process"/>
    <property type="evidence" value="ECO:0007669"/>
    <property type="project" value="UniProtKB-UniRule"/>
</dbReference>
<dbReference type="GO" id="GO:0006227">
    <property type="term" value="P:dUDP biosynthetic process"/>
    <property type="evidence" value="ECO:0007669"/>
    <property type="project" value="TreeGrafter"/>
</dbReference>
<dbReference type="CDD" id="cd01672">
    <property type="entry name" value="TMPK"/>
    <property type="match status" value="1"/>
</dbReference>
<dbReference type="FunFam" id="3.40.50.300:FF:000225">
    <property type="entry name" value="Thymidylate kinase"/>
    <property type="match status" value="1"/>
</dbReference>
<dbReference type="Gene3D" id="3.40.50.300">
    <property type="entry name" value="P-loop containing nucleotide triphosphate hydrolases"/>
    <property type="match status" value="1"/>
</dbReference>
<dbReference type="HAMAP" id="MF_00165">
    <property type="entry name" value="Thymidylate_kinase"/>
    <property type="match status" value="1"/>
</dbReference>
<dbReference type="InterPro" id="IPR027417">
    <property type="entry name" value="P-loop_NTPase"/>
</dbReference>
<dbReference type="InterPro" id="IPR039430">
    <property type="entry name" value="Thymidylate_kin-like_dom"/>
</dbReference>
<dbReference type="InterPro" id="IPR018095">
    <property type="entry name" value="Thymidylate_kin_CS"/>
</dbReference>
<dbReference type="InterPro" id="IPR018094">
    <property type="entry name" value="Thymidylate_kinase"/>
</dbReference>
<dbReference type="NCBIfam" id="TIGR00041">
    <property type="entry name" value="DTMP_kinase"/>
    <property type="match status" value="1"/>
</dbReference>
<dbReference type="PANTHER" id="PTHR10344">
    <property type="entry name" value="THYMIDYLATE KINASE"/>
    <property type="match status" value="1"/>
</dbReference>
<dbReference type="PANTHER" id="PTHR10344:SF4">
    <property type="entry name" value="UMP-CMP KINASE 2, MITOCHONDRIAL"/>
    <property type="match status" value="1"/>
</dbReference>
<dbReference type="Pfam" id="PF02223">
    <property type="entry name" value="Thymidylate_kin"/>
    <property type="match status" value="1"/>
</dbReference>
<dbReference type="SUPFAM" id="SSF52540">
    <property type="entry name" value="P-loop containing nucleoside triphosphate hydrolases"/>
    <property type="match status" value="1"/>
</dbReference>
<dbReference type="PROSITE" id="PS01331">
    <property type="entry name" value="THYMIDYLATE_KINASE"/>
    <property type="match status" value="1"/>
</dbReference>
<organism>
    <name type="scientific">Staphylococcus aureus (strain MSSA476)</name>
    <dbReference type="NCBI Taxonomy" id="282459"/>
    <lineage>
        <taxon>Bacteria</taxon>
        <taxon>Bacillati</taxon>
        <taxon>Bacillota</taxon>
        <taxon>Bacilli</taxon>
        <taxon>Bacillales</taxon>
        <taxon>Staphylococcaceae</taxon>
        <taxon>Staphylococcus</taxon>
    </lineage>
</organism>
<protein>
    <recommendedName>
        <fullName evidence="1">Thymidylate kinase</fullName>
        <ecNumber evidence="1">2.7.4.9</ecNumber>
    </recommendedName>
    <alternativeName>
        <fullName evidence="1">dTMP kinase</fullName>
    </alternativeName>
</protein>
<gene>
    <name evidence="1" type="primary">tmk</name>
    <name type="ordered locus">SAS0439</name>
</gene>
<comment type="function">
    <text evidence="1">Phosphorylation of dTMP to form dTDP in both de novo and salvage pathways of dTTP synthesis.</text>
</comment>
<comment type="catalytic activity">
    <reaction evidence="1">
        <text>dTMP + ATP = dTDP + ADP</text>
        <dbReference type="Rhea" id="RHEA:13517"/>
        <dbReference type="ChEBI" id="CHEBI:30616"/>
        <dbReference type="ChEBI" id="CHEBI:58369"/>
        <dbReference type="ChEBI" id="CHEBI:63528"/>
        <dbReference type="ChEBI" id="CHEBI:456216"/>
        <dbReference type="EC" id="2.7.4.9"/>
    </reaction>
</comment>
<comment type="similarity">
    <text evidence="1">Belongs to the thymidylate kinase family.</text>
</comment>
<sequence>MSAFITFEGPEGSGKTTVINKVYHRLVKDYDVIMTREPGGVPTGEEIRKIVLEGNDMDIRTEAMLFAASRREHLVLKVIPALKEGKVVLCDRYIDSSLAYQGYARGIGVEEVRALNEFAINGLYPDLTIYLNVSAEVGRERIIKNSRDQNRLDQEDLKFHEKVIEGYQEIIHNESQRFKSVNADQPLENVVEDTYQTIIKYLEKI</sequence>
<accession>Q6GC06</accession>
<proteinExistence type="inferred from homology"/>
<evidence type="ECO:0000255" key="1">
    <source>
        <dbReference type="HAMAP-Rule" id="MF_00165"/>
    </source>
</evidence>